<proteinExistence type="inferred from homology"/>
<reference key="1">
    <citation type="journal article" date="2008" name="J. Bacteriol.">
        <title>Insights into the environmental resistance gene pool from the genome sequence of the multidrug-resistant environmental isolate Escherichia coli SMS-3-5.</title>
        <authorList>
            <person name="Fricke W.F."/>
            <person name="Wright M.S."/>
            <person name="Lindell A.H."/>
            <person name="Harkins D.M."/>
            <person name="Baker-Austin C."/>
            <person name="Ravel J."/>
            <person name="Stepanauskas R."/>
        </authorList>
    </citation>
    <scope>NUCLEOTIDE SEQUENCE [LARGE SCALE GENOMIC DNA]</scope>
    <source>
        <strain>SMS-3-5 / SECEC</strain>
    </source>
</reference>
<feature type="chain" id="PRO_1000141403" description="Large ribosomal subunit protein uL1">
    <location>
        <begin position="1"/>
        <end position="234"/>
    </location>
</feature>
<keyword id="KW-0678">Repressor</keyword>
<keyword id="KW-0687">Ribonucleoprotein</keyword>
<keyword id="KW-0689">Ribosomal protein</keyword>
<keyword id="KW-0694">RNA-binding</keyword>
<keyword id="KW-0699">rRNA-binding</keyword>
<keyword id="KW-0810">Translation regulation</keyword>
<keyword id="KW-0820">tRNA-binding</keyword>
<dbReference type="EMBL" id="CP000970">
    <property type="protein sequence ID" value="ACB18136.1"/>
    <property type="molecule type" value="Genomic_DNA"/>
</dbReference>
<dbReference type="RefSeq" id="WP_001096684.1">
    <property type="nucleotide sequence ID" value="NC_010498.1"/>
</dbReference>
<dbReference type="SMR" id="B1LNT6"/>
<dbReference type="GeneID" id="93777910"/>
<dbReference type="KEGG" id="ecm:EcSMS35_4432"/>
<dbReference type="HOGENOM" id="CLU_062853_0_0_6"/>
<dbReference type="Proteomes" id="UP000007011">
    <property type="component" value="Chromosome"/>
</dbReference>
<dbReference type="GO" id="GO:0022625">
    <property type="term" value="C:cytosolic large ribosomal subunit"/>
    <property type="evidence" value="ECO:0007669"/>
    <property type="project" value="TreeGrafter"/>
</dbReference>
<dbReference type="GO" id="GO:0019843">
    <property type="term" value="F:rRNA binding"/>
    <property type="evidence" value="ECO:0007669"/>
    <property type="project" value="UniProtKB-UniRule"/>
</dbReference>
<dbReference type="GO" id="GO:0003735">
    <property type="term" value="F:structural constituent of ribosome"/>
    <property type="evidence" value="ECO:0007669"/>
    <property type="project" value="InterPro"/>
</dbReference>
<dbReference type="GO" id="GO:0000049">
    <property type="term" value="F:tRNA binding"/>
    <property type="evidence" value="ECO:0007669"/>
    <property type="project" value="UniProtKB-KW"/>
</dbReference>
<dbReference type="GO" id="GO:0006417">
    <property type="term" value="P:regulation of translation"/>
    <property type="evidence" value="ECO:0007669"/>
    <property type="project" value="UniProtKB-KW"/>
</dbReference>
<dbReference type="GO" id="GO:0006412">
    <property type="term" value="P:translation"/>
    <property type="evidence" value="ECO:0007669"/>
    <property type="project" value="UniProtKB-UniRule"/>
</dbReference>
<dbReference type="CDD" id="cd00403">
    <property type="entry name" value="Ribosomal_L1"/>
    <property type="match status" value="1"/>
</dbReference>
<dbReference type="FunFam" id="3.40.50.790:FF:000001">
    <property type="entry name" value="50S ribosomal protein L1"/>
    <property type="match status" value="1"/>
</dbReference>
<dbReference type="Gene3D" id="3.30.190.20">
    <property type="match status" value="1"/>
</dbReference>
<dbReference type="Gene3D" id="3.40.50.790">
    <property type="match status" value="1"/>
</dbReference>
<dbReference type="HAMAP" id="MF_01318_B">
    <property type="entry name" value="Ribosomal_uL1_B"/>
    <property type="match status" value="1"/>
</dbReference>
<dbReference type="InterPro" id="IPR005878">
    <property type="entry name" value="Ribosom_uL1_bac-type"/>
</dbReference>
<dbReference type="InterPro" id="IPR002143">
    <property type="entry name" value="Ribosomal_uL1"/>
</dbReference>
<dbReference type="InterPro" id="IPR023674">
    <property type="entry name" value="Ribosomal_uL1-like"/>
</dbReference>
<dbReference type="InterPro" id="IPR028364">
    <property type="entry name" value="Ribosomal_uL1/biogenesis"/>
</dbReference>
<dbReference type="InterPro" id="IPR016095">
    <property type="entry name" value="Ribosomal_uL1_3-a/b-sand"/>
</dbReference>
<dbReference type="InterPro" id="IPR023673">
    <property type="entry name" value="Ribosomal_uL1_CS"/>
</dbReference>
<dbReference type="NCBIfam" id="TIGR01169">
    <property type="entry name" value="rplA_bact"/>
    <property type="match status" value="1"/>
</dbReference>
<dbReference type="PANTHER" id="PTHR36427">
    <property type="entry name" value="54S RIBOSOMAL PROTEIN L1, MITOCHONDRIAL"/>
    <property type="match status" value="1"/>
</dbReference>
<dbReference type="PANTHER" id="PTHR36427:SF3">
    <property type="entry name" value="LARGE RIBOSOMAL SUBUNIT PROTEIN UL1M"/>
    <property type="match status" value="1"/>
</dbReference>
<dbReference type="Pfam" id="PF00687">
    <property type="entry name" value="Ribosomal_L1"/>
    <property type="match status" value="1"/>
</dbReference>
<dbReference type="PIRSF" id="PIRSF002155">
    <property type="entry name" value="Ribosomal_L1"/>
    <property type="match status" value="1"/>
</dbReference>
<dbReference type="SUPFAM" id="SSF56808">
    <property type="entry name" value="Ribosomal protein L1"/>
    <property type="match status" value="1"/>
</dbReference>
<dbReference type="PROSITE" id="PS01199">
    <property type="entry name" value="RIBOSOMAL_L1"/>
    <property type="match status" value="1"/>
</dbReference>
<gene>
    <name evidence="1" type="primary">rplA</name>
    <name type="ordered locus">EcSMS35_4432</name>
</gene>
<accession>B1LNT6</accession>
<sequence length="234" mass="24730">MAKLTKRMRVIREKVDATKQYDINEAIALLKELATAKFVESVDVAVNLGIDARKSDQNVRGATVLPHGTGRSVRVAVFTQGANAEAAKAAGAELVGMEDLADQIKKGEMNFDVVIASPDAMRVVGQLGQVLGPRGLMPNPKVGTVTPNVAEAVKNAKAGQVRYRNDKNGIIHTTIGKVDFDADKLKENLEALLVALKKAKPTQAKGVYIKKVSISTTMGAGVAVDQAGLSASVN</sequence>
<organism>
    <name type="scientific">Escherichia coli (strain SMS-3-5 / SECEC)</name>
    <dbReference type="NCBI Taxonomy" id="439855"/>
    <lineage>
        <taxon>Bacteria</taxon>
        <taxon>Pseudomonadati</taxon>
        <taxon>Pseudomonadota</taxon>
        <taxon>Gammaproteobacteria</taxon>
        <taxon>Enterobacterales</taxon>
        <taxon>Enterobacteriaceae</taxon>
        <taxon>Escherichia</taxon>
    </lineage>
</organism>
<evidence type="ECO:0000255" key="1">
    <source>
        <dbReference type="HAMAP-Rule" id="MF_01318"/>
    </source>
</evidence>
<evidence type="ECO:0000305" key="2"/>
<name>RL1_ECOSM</name>
<protein>
    <recommendedName>
        <fullName evidence="1">Large ribosomal subunit protein uL1</fullName>
    </recommendedName>
    <alternativeName>
        <fullName evidence="2">50S ribosomal protein L1</fullName>
    </alternativeName>
</protein>
<comment type="function">
    <text evidence="1">Binds directly to 23S rRNA. The L1 stalk is quite mobile in the ribosome, and is involved in E site tRNA release.</text>
</comment>
<comment type="function">
    <text evidence="1">Protein L1 is also a translational repressor protein, it controls the translation of the L11 operon by binding to its mRNA.</text>
</comment>
<comment type="subunit">
    <text evidence="1">Part of the 50S ribosomal subunit.</text>
</comment>
<comment type="similarity">
    <text evidence="1">Belongs to the universal ribosomal protein uL1 family.</text>
</comment>